<protein>
    <recommendedName>
        <fullName>CDK5 and ABL1 enzyme substrate 1</fullName>
    </recommendedName>
    <alternativeName>
        <fullName>Interactor with CDK3 1</fullName>
        <shortName>Ik3-1</shortName>
    </alternativeName>
</protein>
<sequence>MAAATATAGTAACSSSSSSRGGSTDAAATSGVQPPPPPPATAPPEPLRKPRMDPRRRQAALSFLTNISLDGRPPLQDHEWGGGEEGGGTKPGARARLSLLAAGCNAFSAPGTAAAPWTAGSGSSPCPLPPSLVPRVLGEPSQPPRSAPAVTGAQLQLPDGPGGAGQEELEEDDAFTNVQVPSASFLGSGTPGSTSGSRGRLNSFTQGILPIAFSRQNSQNYCALEQSGQGGSTSALEQLQRSRRRLISQRSSLETLEDIEENAPLRRCRTLSGSPRPKNFKKIHFIKNMRQHDTKNGRDLKLDGGRQSAGAMSLKEIIGLEGVELGADGKTVSYTQFLLPTNAFGNRRNTIDSTASFSQFRSLSHRSLSMGRAGSTQGSLDAGSDLGDFMDYDPNLLDDPQWPCGKHKRVLTFPSYMTTVIDYVKPSDLKKDMNETFKEKFPHIKLTLSKIRSLKREMRKLAQEDCGFEEPTVAMAFVYFEKLALRGKLNKQNRKLCAGACVLLAAKVGSDLRKHEVKHLIDKLEEKFRLNRRELIAFEFPVLVALEFALHLPEHEVMPHYRRLIQSS</sequence>
<reference key="1">
    <citation type="journal article" date="2000" name="Neuron">
        <title>Cables links Cdk5 and c-Abl and facilitates Cdk5 tyrosine phosphorylation, kinase upregulation, and neurite outgrowth.</title>
        <authorList>
            <person name="Zukerberg L.R."/>
            <person name="Patrick G.N."/>
            <person name="Nikolic M."/>
            <person name="Humbert S."/>
            <person name="Wu C.-L."/>
            <person name="Lanier L.M."/>
            <person name="Gertler F.B."/>
            <person name="Vidal M."/>
            <person name="Van Etten R.A."/>
            <person name="Tsai L.-H."/>
        </authorList>
    </citation>
    <scope>NUCLEOTIDE SEQUENCE [MRNA]</scope>
    <scope>TISSUE SPECIFICITY</scope>
    <scope>SUBCELLULAR LOCATION</scope>
    <scope>DEVELOPMENTAL STAGE</scope>
    <scope>PHOSPHORYLATION BY CDK5 AND ABL1</scope>
    <scope>IDENTIFICATION IN A TRIMOLECULAR COMPLEX WITH CDK5 AND ABL1</scope>
    <scope>INTERACTION WITH CDK5 AND ABL1</scope>
    <source>
        <tissue>Brain</tissue>
    </source>
</reference>
<reference key="2">
    <citation type="journal article" date="2000" name="Biochem. Biophys. Res. Commun.">
        <title>Molecular cloning of a cyclin-like protein associated with cyclin-dependent kinase 3 (cdk 3) in vivo.</title>
        <authorList>
            <person name="Matsuoka M."/>
            <person name="Matsuura Y."/>
            <person name="Semba K."/>
            <person name="Nishimoto I."/>
        </authorList>
    </citation>
    <scope>NUCLEOTIDE SEQUENCE [MRNA]</scope>
    <scope>PROBABLE FUNCTION IN G1-S CELL CYCLE TRANSITION</scope>
    <scope>TISSUE SPECIFICITY</scope>
    <scope>INTERACTION WITH CDK3</scope>
    <source>
        <strain>BALB/cJ</strain>
        <tissue>Brain</tissue>
    </source>
</reference>
<reference key="3">
    <citation type="journal article" date="2009" name="PLoS Biol.">
        <title>Lineage-specific biology revealed by a finished genome assembly of the mouse.</title>
        <authorList>
            <person name="Church D.M."/>
            <person name="Goodstadt L."/>
            <person name="Hillier L.W."/>
            <person name="Zody M.C."/>
            <person name="Goldstein S."/>
            <person name="She X."/>
            <person name="Bult C.J."/>
            <person name="Agarwala R."/>
            <person name="Cherry J.L."/>
            <person name="DiCuccio M."/>
            <person name="Hlavina W."/>
            <person name="Kapustin Y."/>
            <person name="Meric P."/>
            <person name="Maglott D."/>
            <person name="Birtle Z."/>
            <person name="Marques A.C."/>
            <person name="Graves T."/>
            <person name="Zhou S."/>
            <person name="Teague B."/>
            <person name="Potamousis K."/>
            <person name="Churas C."/>
            <person name="Place M."/>
            <person name="Herschleb J."/>
            <person name="Runnheim R."/>
            <person name="Forrest D."/>
            <person name="Amos-Landgraf J."/>
            <person name="Schwartz D.C."/>
            <person name="Cheng Z."/>
            <person name="Lindblad-Toh K."/>
            <person name="Eichler E.E."/>
            <person name="Ponting C.P."/>
        </authorList>
    </citation>
    <scope>NUCLEOTIDE SEQUENCE [LARGE SCALE GENOMIC DNA]</scope>
    <source>
        <strain>C57BL/6J</strain>
    </source>
</reference>
<reference key="4">
    <citation type="journal article" date="2001" name="Eur. J. Biochem.">
        <title>ik3-1/Cables is a substrate for cyclin-dependent kinase 3 (cdk 3).</title>
        <authorList>
            <person name="Yamochi T."/>
            <person name="Semba K."/>
            <person name="Tsuji K."/>
            <person name="Mizumoto K."/>
            <person name="Sato H."/>
            <person name="Matsuura Y."/>
            <person name="Nishimoto I."/>
            <person name="Matsuoka M."/>
        </authorList>
    </citation>
    <scope>PHOSPHORYLATION BY CCNA1/CDK2; CCNE1/CDK2; CCNA1/CDK3 AND CCNE1/CDK3</scope>
    <scope>PHOSPHORYLATION AT SER-274</scope>
    <scope>MUTAGENESIS OF SER-274</scope>
</reference>
<reference key="5">
    <citation type="journal article" date="2001" name="Biochem. Biophys. Res. Commun.">
        <title>ik3-1/Cables is associated with Trap and Pctaire2.</title>
        <authorList>
            <person name="Yamochi T."/>
            <person name="Nishimoto I."/>
            <person name="Okuda T."/>
            <person name="Matsuoka M."/>
        </authorList>
    </citation>
    <scope>SUBCELLULAR LOCATION</scope>
    <scope>INTERACTION WITH TDRD7</scope>
    <scope>IDENTIFICATION IN A COMPLEX WITH TDRD7 AND CDK17</scope>
</reference>
<reference key="6">
    <citation type="journal article" date="2001" name="Cancer Res.">
        <title>Cables enhances cdk2 tyrosine 15 phosphorylation by Wee1, inhibits cell growth, and is lost in many human colon and squamous cancers.</title>
        <authorList>
            <person name="Wu C.-L."/>
            <person name="Kirley S.D."/>
            <person name="Xiao H."/>
            <person name="Chuang Y."/>
            <person name="Chung D.C."/>
            <person name="Zukerberg L.R."/>
        </authorList>
    </citation>
    <scope>SUBCELLULAR LOCATION</scope>
    <scope>IDENTIFICATION IN A COMPLEX WITH CDK2; CCNA1 AND CCNE1</scope>
    <scope>INTERACTION WITH CDK2</scope>
</reference>
<reference key="7">
    <citation type="journal article" date="2002" name="J. Biol. Chem.">
        <title>Differential effect of ik3-1/cables on p53- and p73-induced cell death.</title>
        <authorList>
            <person name="Tsuji K."/>
            <person name="Mizumoto K."/>
            <person name="Yamochi T."/>
            <person name="Nishimoto I."/>
            <person name="Matsuoka M."/>
        </authorList>
    </citation>
    <scope>FUNCTION IN CELL DEATH</scope>
    <scope>SUBCELLULAR LOCATION</scope>
    <scope>IDENTIFICATION IN A COMPLEX WITH TP53 AND TP73</scope>
</reference>
<reference key="8">
    <citation type="journal article" date="2010" name="Cell">
        <title>A tissue-specific atlas of mouse protein phosphorylation and expression.</title>
        <authorList>
            <person name="Huttlin E.L."/>
            <person name="Jedrychowski M.P."/>
            <person name="Elias J.E."/>
            <person name="Goswami T."/>
            <person name="Rad R."/>
            <person name="Beausoleil S.A."/>
            <person name="Villen J."/>
            <person name="Haas W."/>
            <person name="Sowa M.E."/>
            <person name="Gygi S.P."/>
        </authorList>
    </citation>
    <scope>PHOSPHORYLATION [LARGE SCALE ANALYSIS] AT THR-350</scope>
    <scope>IDENTIFICATION BY MASS SPECTROMETRY [LARGE SCALE ANALYSIS]</scope>
    <source>
        <tissue>Brain</tissue>
        <tissue>Brown adipose tissue</tissue>
        <tissue>Kidney</tissue>
    </source>
</reference>
<gene>
    <name type="primary">Cables1</name>
    <name type="synonym">Cables</name>
</gene>
<comment type="function">
    <text evidence="1 8">Cyclin-dependent kinase binding protein. Enhances cyclin-dependent kinase tyrosine phosphorylation by nonreceptor tyrosine kinases, such as that of CDK5 by activated ABL1, which leads to increased CDK5 activity and is critical for neuronal development, and that of CDK2 by WEE1, which leads to decreased CDK2 activity and growth inhibition. Positively affects neuronal outgrowth. Plays a role as a regulator for p53/p73-induced cell death (By similarity).</text>
</comment>
<comment type="subunit">
    <text evidence="1 4 5 6 7 8">Found in a complex with p53/TP53 (By similarity). Found in a number of complexes with CDK2, CDK3, CDK5, ABL1, TDRD7, CDK17, CCNA1, CCNE1 and TP73. Interacts with CDK2, CDK3, CDK5, ABL1 and TDRD7.</text>
</comment>
<comment type="interaction">
    <interactant intactId="EBI-604411">
        <id>Q9ESJ1</id>
    </interactant>
    <interactant intactId="EBI-2338025">
        <id>O88898</id>
        <label>Tp63</label>
    </interactant>
    <organismsDiffer>false</organismsDiffer>
    <experiments>2</experiments>
</comment>
<comment type="interaction">
    <interactant intactId="EBI-604411">
        <id>Q9ESJ1</id>
    </interactant>
    <interactant intactId="EBI-366083">
        <id>P04637</id>
        <label>TP53</label>
    </interactant>
    <organismsDiffer>true</organismsDiffer>
    <experiments>3</experiments>
</comment>
<comment type="interaction">
    <interactant intactId="EBI-604411">
        <id>Q9ESJ1</id>
    </interactant>
    <interactant intactId="EBI-389606">
        <id>O15350</id>
        <label>TP73</label>
    </interactant>
    <organismsDiffer>true</organismsDiffer>
    <experiments>3</experiments>
</comment>
<comment type="subcellular location">
    <subcellularLocation>
        <location>Nucleus</location>
    </subcellularLocation>
    <subcellularLocation>
        <location>Cytoplasm</location>
    </subcellularLocation>
    <subcellularLocation>
        <location>Cell projection</location>
        <location>Growth cone</location>
    </subcellularLocation>
    <text>Located in the cell body and proximal region of the developing axonal shaft of immature neurons. Located in axonal growth cone, but not in the distal part of the axon shaft or in dendritic growth cone of mature neurons.</text>
</comment>
<comment type="tissue specificity">
    <text evidence="4 5">Ubiquitous. Expressed in postnatal day 1 (P1), in postmitotic neurons of the subplate, cortex (V/VI) and marginal zone; in postnatal day 7 (P7), in all layers of the cerebral cortex and in the CA1 and CA2 regions of the hippocampus (at protein level). Highly expressed in brain, kidney, liver and lung.</text>
</comment>
<comment type="developmental stage">
    <text evidence="5">Expressed in embryo at 15 dpc and strongly expressed in postmitotic neurons of the subplate, cortical plate, subventrical and marginal zones at 18 dpc (at protein level). Expressed in embryo at 7 dpc onwards.</text>
</comment>
<comment type="PTM">
    <text evidence="5 9">Phosphorylated on Ser-274 by CCNE1/CDK3. Phosphorylated on serine/threonine residues by CDK5 and on tyrosine residues by ABL1. Also phosphorylated in vitro by CCNA1/CDK2, CCNE1/CDK2, CCNA1/CDK3 and CCNE1/CDK3.</text>
</comment>
<comment type="similarity">
    <text evidence="10">Belongs to the cyclin family.</text>
</comment>
<comment type="caution">
    <text evidence="10">PubMed:10896159 demonstrated that CABLES1 is not associated with CDK3.</text>
</comment>
<keyword id="KW-0131">Cell cycle</keyword>
<keyword id="KW-0132">Cell division</keyword>
<keyword id="KW-0966">Cell projection</keyword>
<keyword id="KW-0195">Cyclin</keyword>
<keyword id="KW-0963">Cytoplasm</keyword>
<keyword id="KW-0539">Nucleus</keyword>
<keyword id="KW-0597">Phosphoprotein</keyword>
<keyword id="KW-1185">Reference proteome</keyword>
<proteinExistence type="evidence at protein level"/>
<dbReference type="EMBL" id="AF133208">
    <property type="protein sequence ID" value="AAG33933.1"/>
    <property type="molecule type" value="mRNA"/>
</dbReference>
<dbReference type="EMBL" id="AF328140">
    <property type="protein sequence ID" value="AAG42916.1"/>
    <property type="molecule type" value="mRNA"/>
</dbReference>
<dbReference type="EMBL" id="AC100751">
    <property type="status" value="NOT_ANNOTATED_CDS"/>
    <property type="molecule type" value="Genomic_DNA"/>
</dbReference>
<dbReference type="EMBL" id="AC132941">
    <property type="status" value="NOT_ANNOTATED_CDS"/>
    <property type="molecule type" value="Genomic_DNA"/>
</dbReference>
<dbReference type="CCDS" id="CCDS29061.1"/>
<dbReference type="PIR" id="JC7317">
    <property type="entry name" value="JC7317"/>
</dbReference>
<dbReference type="RefSeq" id="NP_071304.2">
    <property type="nucleotide sequence ID" value="NM_022021.3"/>
</dbReference>
<dbReference type="BioGRID" id="211007">
    <property type="interactions" value="2"/>
</dbReference>
<dbReference type="CORUM" id="Q9ESJ1"/>
<dbReference type="ELM" id="Q9ESJ1"/>
<dbReference type="FunCoup" id="Q9ESJ1">
    <property type="interactions" value="1270"/>
</dbReference>
<dbReference type="IntAct" id="Q9ESJ1">
    <property type="interactions" value="3"/>
</dbReference>
<dbReference type="MINT" id="Q9ESJ1"/>
<dbReference type="STRING" id="10090.ENSMUSP00000129463"/>
<dbReference type="GlyGen" id="Q9ESJ1">
    <property type="glycosylation" value="2 sites, 2 N-linked glycans (2 sites)"/>
</dbReference>
<dbReference type="iPTMnet" id="Q9ESJ1"/>
<dbReference type="PhosphoSitePlus" id="Q9ESJ1"/>
<dbReference type="jPOST" id="Q9ESJ1"/>
<dbReference type="PaxDb" id="10090-ENSMUSP00000129463"/>
<dbReference type="ProteomicsDB" id="273872"/>
<dbReference type="Antibodypedia" id="22022">
    <property type="antibodies" value="181 antibodies from 26 providers"/>
</dbReference>
<dbReference type="Ensembl" id="ENSMUST00000046948.10">
    <property type="protein sequence ID" value="ENSMUSP00000040639.8"/>
    <property type="gene ID" value="ENSMUSG00000040957.16"/>
</dbReference>
<dbReference type="GeneID" id="63955"/>
<dbReference type="KEGG" id="mmu:63955"/>
<dbReference type="UCSC" id="uc012azi.1">
    <property type="organism name" value="mouse"/>
</dbReference>
<dbReference type="AGR" id="MGI:1927065"/>
<dbReference type="CTD" id="91768"/>
<dbReference type="MGI" id="MGI:1927065">
    <property type="gene designation" value="Cables1"/>
</dbReference>
<dbReference type="VEuPathDB" id="HostDB:ENSMUSG00000040957"/>
<dbReference type="eggNOG" id="KOG4164">
    <property type="taxonomic scope" value="Eukaryota"/>
</dbReference>
<dbReference type="GeneTree" id="ENSGT00400000022086"/>
<dbReference type="InParanoid" id="Q9ESJ1"/>
<dbReference type="OrthoDB" id="5353095at2759"/>
<dbReference type="Reactome" id="R-MMU-69202">
    <property type="pathway name" value="Cyclin E associated events during G1/S transition"/>
</dbReference>
<dbReference type="Reactome" id="R-MMU-69656">
    <property type="pathway name" value="Cyclin A:Cdk2-associated events at S phase entry"/>
</dbReference>
<dbReference type="BioGRID-ORCS" id="63955">
    <property type="hits" value="3 hits in 77 CRISPR screens"/>
</dbReference>
<dbReference type="ChiTaRS" id="Cables1">
    <property type="organism name" value="mouse"/>
</dbReference>
<dbReference type="PRO" id="PR:Q9ESJ1"/>
<dbReference type="Proteomes" id="UP000000589">
    <property type="component" value="Chromosome 18"/>
</dbReference>
<dbReference type="RNAct" id="Q9ESJ1">
    <property type="molecule type" value="protein"/>
</dbReference>
<dbReference type="Bgee" id="ENSMUSG00000040957">
    <property type="expression patterns" value="Expressed in habenula and 233 other cell types or tissues"/>
</dbReference>
<dbReference type="ExpressionAtlas" id="Q9ESJ1">
    <property type="expression patterns" value="baseline and differential"/>
</dbReference>
<dbReference type="GO" id="GO:0005829">
    <property type="term" value="C:cytosol"/>
    <property type="evidence" value="ECO:0000304"/>
    <property type="project" value="Reactome"/>
</dbReference>
<dbReference type="GO" id="GO:0030426">
    <property type="term" value="C:growth cone"/>
    <property type="evidence" value="ECO:0007669"/>
    <property type="project" value="UniProtKB-SubCell"/>
</dbReference>
<dbReference type="GO" id="GO:0005654">
    <property type="term" value="C:nucleoplasm"/>
    <property type="evidence" value="ECO:0000304"/>
    <property type="project" value="Reactome"/>
</dbReference>
<dbReference type="GO" id="GO:0051301">
    <property type="term" value="P:cell division"/>
    <property type="evidence" value="ECO:0007669"/>
    <property type="project" value="UniProtKB-KW"/>
</dbReference>
<dbReference type="GO" id="GO:0000082">
    <property type="term" value="P:G1/S transition of mitotic cell cycle"/>
    <property type="evidence" value="ECO:0000304"/>
    <property type="project" value="MGI"/>
</dbReference>
<dbReference type="GO" id="GO:0007399">
    <property type="term" value="P:nervous system development"/>
    <property type="evidence" value="ECO:0000315"/>
    <property type="project" value="MGI"/>
</dbReference>
<dbReference type="GO" id="GO:0051726">
    <property type="term" value="P:regulation of cell cycle"/>
    <property type="evidence" value="ECO:0000304"/>
    <property type="project" value="MGI"/>
</dbReference>
<dbReference type="CDD" id="cd20602">
    <property type="entry name" value="CYCLIN_CABLES1"/>
    <property type="match status" value="1"/>
</dbReference>
<dbReference type="FunFam" id="1.10.472.10:FF:000020">
    <property type="entry name" value="CDK5 and ABL1 enzyme substrate 1"/>
    <property type="match status" value="1"/>
</dbReference>
<dbReference type="Gene3D" id="1.10.472.10">
    <property type="entry name" value="Cyclin-like"/>
    <property type="match status" value="1"/>
</dbReference>
<dbReference type="InterPro" id="IPR012388">
    <property type="entry name" value="CABLES1/2"/>
</dbReference>
<dbReference type="InterPro" id="IPR036915">
    <property type="entry name" value="Cyclin-like_sf"/>
</dbReference>
<dbReference type="InterPro" id="IPR006671">
    <property type="entry name" value="Cyclin_N"/>
</dbReference>
<dbReference type="PANTHER" id="PTHR22896">
    <property type="entry name" value="CDK5 AND ABL1 ENZYME SUBSTRATE 1"/>
    <property type="match status" value="1"/>
</dbReference>
<dbReference type="PANTHER" id="PTHR22896:SF1">
    <property type="entry name" value="CDK5 AND ABL1 ENZYME SUBSTRATE 1"/>
    <property type="match status" value="1"/>
</dbReference>
<dbReference type="Pfam" id="PF00134">
    <property type="entry name" value="Cyclin_N"/>
    <property type="match status" value="1"/>
</dbReference>
<dbReference type="PIRSF" id="PIRSF025798">
    <property type="entry name" value="Cables"/>
    <property type="match status" value="1"/>
</dbReference>
<dbReference type="SUPFAM" id="SSF47954">
    <property type="entry name" value="Cyclin-like"/>
    <property type="match status" value="1"/>
</dbReference>
<accession>Q9ESJ1</accession>
<accession>E9QNI6</accession>
<accession>Q9EPR8</accession>
<evidence type="ECO:0000250" key="1"/>
<evidence type="ECO:0000250" key="2">
    <source>
        <dbReference type="UniProtKB" id="Q8TDN4"/>
    </source>
</evidence>
<evidence type="ECO:0000256" key="3">
    <source>
        <dbReference type="SAM" id="MobiDB-lite"/>
    </source>
</evidence>
<evidence type="ECO:0000269" key="4">
    <source>
    </source>
</evidence>
<evidence type="ECO:0000269" key="5">
    <source>
    </source>
</evidence>
<evidence type="ECO:0000269" key="6">
    <source>
    </source>
</evidence>
<evidence type="ECO:0000269" key="7">
    <source>
    </source>
</evidence>
<evidence type="ECO:0000269" key="8">
    <source>
    </source>
</evidence>
<evidence type="ECO:0000269" key="9">
    <source>
    </source>
</evidence>
<evidence type="ECO:0000305" key="10"/>
<evidence type="ECO:0007744" key="11">
    <source>
    </source>
</evidence>
<feature type="chain" id="PRO_0000080511" description="CDK5 and ABL1 enzyme substrate 1">
    <location>
        <begin position="1"/>
        <end position="568"/>
    </location>
</feature>
<feature type="region of interest" description="Interaction with TDRD7" evidence="6">
    <location>
        <begin position="1"/>
        <end position="98"/>
    </location>
</feature>
<feature type="region of interest" description="Disordered" evidence="3">
    <location>
        <begin position="1"/>
        <end position="94"/>
    </location>
</feature>
<feature type="region of interest" description="Disordered" evidence="3">
    <location>
        <begin position="130"/>
        <end position="169"/>
    </location>
</feature>
<feature type="region of interest" description="Interaction with CDK3" evidence="4">
    <location>
        <begin position="140"/>
        <end position="427"/>
    </location>
</feature>
<feature type="compositionally biased region" description="Low complexity" evidence="3">
    <location>
        <begin position="1"/>
        <end position="31"/>
    </location>
</feature>
<feature type="compositionally biased region" description="Pro residues" evidence="3">
    <location>
        <begin position="33"/>
        <end position="45"/>
    </location>
</feature>
<feature type="compositionally biased region" description="Basic and acidic residues" evidence="3">
    <location>
        <begin position="46"/>
        <end position="56"/>
    </location>
</feature>
<feature type="modified residue" description="Phosphoserine" evidence="2">
    <location>
        <position position="248"/>
    </location>
</feature>
<feature type="modified residue" description="Phosphoserine; by CDK2 and CDK3" evidence="9">
    <location>
        <position position="274"/>
    </location>
</feature>
<feature type="modified residue" description="Phosphothreonine" evidence="11">
    <location>
        <position position="350"/>
    </location>
</feature>
<feature type="mutagenesis site" description="Less efficiently phosphorylated in vitro." evidence="9">
    <original>S</original>
    <variation>A</variation>
    <location>
        <position position="274"/>
    </location>
</feature>
<feature type="mutagenesis site" description="Efficiently phosphorylated in vitro." evidence="9">
    <original>S</original>
    <variation>T</variation>
    <location>
        <position position="274"/>
    </location>
</feature>
<feature type="sequence conflict" description="In Ref. 1; AAG33933." evidence="10" ref="1">
    <original>EE</original>
    <variation>DQ</variation>
    <location>
        <begin position="84"/>
        <end position="85"/>
    </location>
</feature>
<feature type="sequence conflict" description="In Ref. 1; AAG33933." evidence="10" ref="1">
    <original>S</original>
    <variation>A</variation>
    <location>
        <position position="242"/>
    </location>
</feature>
<feature type="sequence conflict" description="In Ref. 1; AAG33933." evidence="10" ref="1">
    <original>S</original>
    <variation>C</variation>
    <location>
        <position position="384"/>
    </location>
</feature>
<feature type="sequence conflict" description="In Ref. 1; AAG33933 and 2; AAG42916." evidence="10" ref="1 2">
    <original>M</original>
    <variation>V</variation>
    <location>
        <position position="390"/>
    </location>
</feature>
<name>CABL1_MOUSE</name>
<organism>
    <name type="scientific">Mus musculus</name>
    <name type="common">Mouse</name>
    <dbReference type="NCBI Taxonomy" id="10090"/>
    <lineage>
        <taxon>Eukaryota</taxon>
        <taxon>Metazoa</taxon>
        <taxon>Chordata</taxon>
        <taxon>Craniata</taxon>
        <taxon>Vertebrata</taxon>
        <taxon>Euteleostomi</taxon>
        <taxon>Mammalia</taxon>
        <taxon>Eutheria</taxon>
        <taxon>Euarchontoglires</taxon>
        <taxon>Glires</taxon>
        <taxon>Rodentia</taxon>
        <taxon>Myomorpha</taxon>
        <taxon>Muroidea</taxon>
        <taxon>Muridae</taxon>
        <taxon>Murinae</taxon>
        <taxon>Mus</taxon>
        <taxon>Mus</taxon>
    </lineage>
</organism>